<keyword id="KW-0489">Methyltransferase</keyword>
<keyword id="KW-0949">S-adenosyl-L-methionine</keyword>
<keyword id="KW-0808">Transferase</keyword>
<keyword id="KW-0831">Ubiquinone biosynthesis</keyword>
<gene>
    <name evidence="1" type="primary">ubiG</name>
    <name type="ordered locus">VP1933</name>
</gene>
<dbReference type="EC" id="2.1.1.222" evidence="1"/>
<dbReference type="EC" id="2.1.1.64" evidence="1"/>
<dbReference type="EMBL" id="BA000031">
    <property type="protein sequence ID" value="BAC60196.1"/>
    <property type="molecule type" value="Genomic_DNA"/>
</dbReference>
<dbReference type="RefSeq" id="NP_798312.1">
    <property type="nucleotide sequence ID" value="NC_004603.1"/>
</dbReference>
<dbReference type="RefSeq" id="WP_005483291.1">
    <property type="nucleotide sequence ID" value="NC_004603.1"/>
</dbReference>
<dbReference type="SMR" id="Q87ND5"/>
<dbReference type="GeneID" id="1189440"/>
<dbReference type="KEGG" id="vpa:VP1933"/>
<dbReference type="PATRIC" id="fig|223926.6.peg.1848"/>
<dbReference type="eggNOG" id="COG2227">
    <property type="taxonomic scope" value="Bacteria"/>
</dbReference>
<dbReference type="HOGENOM" id="CLU_042432_5_0_6"/>
<dbReference type="UniPathway" id="UPA00232"/>
<dbReference type="Proteomes" id="UP000002493">
    <property type="component" value="Chromosome 1"/>
</dbReference>
<dbReference type="GO" id="GO:0102208">
    <property type="term" value="F:2-polyprenyl-6-hydroxyphenol methylase activity"/>
    <property type="evidence" value="ECO:0007669"/>
    <property type="project" value="UniProtKB-EC"/>
</dbReference>
<dbReference type="GO" id="GO:0061542">
    <property type="term" value="F:3-demethylubiquinol 3-O-methyltransferase activity"/>
    <property type="evidence" value="ECO:0007669"/>
    <property type="project" value="UniProtKB-UniRule"/>
</dbReference>
<dbReference type="GO" id="GO:0010420">
    <property type="term" value="F:polyprenyldihydroxybenzoate methyltransferase activity"/>
    <property type="evidence" value="ECO:0007669"/>
    <property type="project" value="InterPro"/>
</dbReference>
<dbReference type="GO" id="GO:0032259">
    <property type="term" value="P:methylation"/>
    <property type="evidence" value="ECO:0007669"/>
    <property type="project" value="UniProtKB-KW"/>
</dbReference>
<dbReference type="CDD" id="cd02440">
    <property type="entry name" value="AdoMet_MTases"/>
    <property type="match status" value="1"/>
</dbReference>
<dbReference type="FunFam" id="3.40.50.150:FF:000028">
    <property type="entry name" value="Ubiquinone biosynthesis O-methyltransferase"/>
    <property type="match status" value="1"/>
</dbReference>
<dbReference type="Gene3D" id="3.40.50.150">
    <property type="entry name" value="Vaccinia Virus protein VP39"/>
    <property type="match status" value="1"/>
</dbReference>
<dbReference type="HAMAP" id="MF_00472">
    <property type="entry name" value="UbiG"/>
    <property type="match status" value="1"/>
</dbReference>
<dbReference type="InterPro" id="IPR029063">
    <property type="entry name" value="SAM-dependent_MTases_sf"/>
</dbReference>
<dbReference type="InterPro" id="IPR010233">
    <property type="entry name" value="UbiG_MeTrfase"/>
</dbReference>
<dbReference type="NCBIfam" id="TIGR01983">
    <property type="entry name" value="UbiG"/>
    <property type="match status" value="1"/>
</dbReference>
<dbReference type="PANTHER" id="PTHR43464">
    <property type="entry name" value="METHYLTRANSFERASE"/>
    <property type="match status" value="1"/>
</dbReference>
<dbReference type="PANTHER" id="PTHR43464:SF19">
    <property type="entry name" value="UBIQUINONE BIOSYNTHESIS O-METHYLTRANSFERASE, MITOCHONDRIAL"/>
    <property type="match status" value="1"/>
</dbReference>
<dbReference type="Pfam" id="PF13489">
    <property type="entry name" value="Methyltransf_23"/>
    <property type="match status" value="1"/>
</dbReference>
<dbReference type="SUPFAM" id="SSF53335">
    <property type="entry name" value="S-adenosyl-L-methionine-dependent methyltransferases"/>
    <property type="match status" value="1"/>
</dbReference>
<name>UBIG_VIBPA</name>
<accession>Q87ND5</accession>
<sequence length="235" mass="26179">MTKAQNVDPSEIKKFEEMASRWWDLEGEFKPLHQINPLRLNYVLEKADGLFGKKVLDVGCGGGILAESMAKEGATVTGLDMGKEPLEVARLHALETGTKLTYIQSTIEDHAAENAGTYDVVTCMEMLEHVPDPLSVIRSCAALVKPGGHVFFSTLNRNIKSYLFAIVGAEKLLKIVPEGTHDHEKFIKPAEMMKMIDQTDLTEMGITGLHYNPLNDSYKLGRNVDVNYIVHTKKY</sequence>
<feature type="chain" id="PRO_0000193406" description="Ubiquinone biosynthesis O-methyltransferase">
    <location>
        <begin position="1"/>
        <end position="235"/>
    </location>
</feature>
<feature type="binding site" evidence="1">
    <location>
        <position position="39"/>
    </location>
    <ligand>
        <name>S-adenosyl-L-methionine</name>
        <dbReference type="ChEBI" id="CHEBI:59789"/>
    </ligand>
</feature>
<feature type="binding site" evidence="1">
    <location>
        <position position="59"/>
    </location>
    <ligand>
        <name>S-adenosyl-L-methionine</name>
        <dbReference type="ChEBI" id="CHEBI:59789"/>
    </ligand>
</feature>
<feature type="binding site" evidence="1">
    <location>
        <position position="80"/>
    </location>
    <ligand>
        <name>S-adenosyl-L-methionine</name>
        <dbReference type="ChEBI" id="CHEBI:59789"/>
    </ligand>
</feature>
<feature type="binding site" evidence="1">
    <location>
        <position position="124"/>
    </location>
    <ligand>
        <name>S-adenosyl-L-methionine</name>
        <dbReference type="ChEBI" id="CHEBI:59789"/>
    </ligand>
</feature>
<comment type="function">
    <text evidence="1">O-methyltransferase that catalyzes the 2 O-methylation steps in the ubiquinone biosynthetic pathway.</text>
</comment>
<comment type="catalytic activity">
    <reaction evidence="1">
        <text>a 3-demethylubiquinol + S-adenosyl-L-methionine = a ubiquinol + S-adenosyl-L-homocysteine + H(+)</text>
        <dbReference type="Rhea" id="RHEA:44380"/>
        <dbReference type="Rhea" id="RHEA-COMP:9566"/>
        <dbReference type="Rhea" id="RHEA-COMP:10914"/>
        <dbReference type="ChEBI" id="CHEBI:15378"/>
        <dbReference type="ChEBI" id="CHEBI:17976"/>
        <dbReference type="ChEBI" id="CHEBI:57856"/>
        <dbReference type="ChEBI" id="CHEBI:59789"/>
        <dbReference type="ChEBI" id="CHEBI:84422"/>
        <dbReference type="EC" id="2.1.1.64"/>
    </reaction>
</comment>
<comment type="catalytic activity">
    <reaction evidence="1">
        <text>a 3-(all-trans-polyprenyl)benzene-1,2-diol + S-adenosyl-L-methionine = a 2-methoxy-6-(all-trans-polyprenyl)phenol + S-adenosyl-L-homocysteine + H(+)</text>
        <dbReference type="Rhea" id="RHEA:31411"/>
        <dbReference type="Rhea" id="RHEA-COMP:9550"/>
        <dbReference type="Rhea" id="RHEA-COMP:9551"/>
        <dbReference type="ChEBI" id="CHEBI:15378"/>
        <dbReference type="ChEBI" id="CHEBI:57856"/>
        <dbReference type="ChEBI" id="CHEBI:59789"/>
        <dbReference type="ChEBI" id="CHEBI:62729"/>
        <dbReference type="ChEBI" id="CHEBI:62731"/>
        <dbReference type="EC" id="2.1.1.222"/>
    </reaction>
</comment>
<comment type="pathway">
    <text evidence="1">Cofactor biosynthesis; ubiquinone biosynthesis.</text>
</comment>
<comment type="similarity">
    <text evidence="1">Belongs to the methyltransferase superfamily. UbiG/COQ3 family.</text>
</comment>
<organism>
    <name type="scientific">Vibrio parahaemolyticus serotype O3:K6 (strain RIMD 2210633)</name>
    <dbReference type="NCBI Taxonomy" id="223926"/>
    <lineage>
        <taxon>Bacteria</taxon>
        <taxon>Pseudomonadati</taxon>
        <taxon>Pseudomonadota</taxon>
        <taxon>Gammaproteobacteria</taxon>
        <taxon>Vibrionales</taxon>
        <taxon>Vibrionaceae</taxon>
        <taxon>Vibrio</taxon>
    </lineage>
</organism>
<reference key="1">
    <citation type="journal article" date="2003" name="Lancet">
        <title>Genome sequence of Vibrio parahaemolyticus: a pathogenic mechanism distinct from that of V. cholerae.</title>
        <authorList>
            <person name="Makino K."/>
            <person name="Oshima K."/>
            <person name="Kurokawa K."/>
            <person name="Yokoyama K."/>
            <person name="Uda T."/>
            <person name="Tagomori K."/>
            <person name="Iijima Y."/>
            <person name="Najima M."/>
            <person name="Nakano M."/>
            <person name="Yamashita A."/>
            <person name="Kubota Y."/>
            <person name="Kimura S."/>
            <person name="Yasunaga T."/>
            <person name="Honda T."/>
            <person name="Shinagawa H."/>
            <person name="Hattori M."/>
            <person name="Iida T."/>
        </authorList>
    </citation>
    <scope>NUCLEOTIDE SEQUENCE [LARGE SCALE GENOMIC DNA]</scope>
    <source>
        <strain>RIMD 2210633</strain>
    </source>
</reference>
<evidence type="ECO:0000255" key="1">
    <source>
        <dbReference type="HAMAP-Rule" id="MF_00472"/>
    </source>
</evidence>
<protein>
    <recommendedName>
        <fullName evidence="1">Ubiquinone biosynthesis O-methyltransferase</fullName>
    </recommendedName>
    <alternativeName>
        <fullName evidence="1">2-polyprenyl-6-hydroxyphenol methylase</fullName>
        <ecNumber evidence="1">2.1.1.222</ecNumber>
    </alternativeName>
    <alternativeName>
        <fullName evidence="1">3-demethylubiquinone 3-O-methyltransferase</fullName>
        <ecNumber evidence="1">2.1.1.64</ecNumber>
    </alternativeName>
</protein>
<proteinExistence type="inferred from homology"/>